<reference key="1">
    <citation type="journal article" date="1998" name="J. Fish Biol.">
        <title>Differential expression of Atlantic salmon (Salmo salar) thyrotropin beta subunit mRNA and its cDNA sequence.</title>
        <authorList>
            <person name="Martin S.A.M."/>
            <person name="Wallner W."/>
            <person name="Youngson A.F."/>
            <person name="Smith T."/>
        </authorList>
    </citation>
    <scope>NUCLEOTIDE SEQUENCE [MRNA]</scope>
    <source>
        <tissue>Pituitary</tissue>
    </source>
</reference>
<dbReference type="EMBL" id="AF060566">
    <property type="protein sequence ID" value="AAC77908.1"/>
    <property type="molecule type" value="mRNA"/>
</dbReference>
<dbReference type="RefSeq" id="NP_001117000.1">
    <property type="nucleotide sequence ID" value="NM_001123528.1"/>
</dbReference>
<dbReference type="SMR" id="O73824"/>
<dbReference type="STRING" id="8030.ENSSSAP00000050903"/>
<dbReference type="GlyCosmos" id="O73824">
    <property type="glycosylation" value="1 site, No reported glycans"/>
</dbReference>
<dbReference type="PaxDb" id="8030-ENSSSAP00000050903"/>
<dbReference type="Ensembl" id="ENSSSAT00020170873">
    <property type="protein sequence ID" value="ENSSSAP00020130674"/>
    <property type="gene ID" value="ENSSSAG00020072355"/>
</dbReference>
<dbReference type="Ensembl" id="ENSSSAT00070010972">
    <property type="protein sequence ID" value="ENSSSAP00070010349"/>
    <property type="gene ID" value="ENSSSAG00070007129"/>
</dbReference>
<dbReference type="Ensembl" id="ENSSSAT00075071570">
    <property type="protein sequence ID" value="ENSSSAP00075051471"/>
    <property type="gene ID" value="ENSSSAG00075034323"/>
</dbReference>
<dbReference type="GeneID" id="100136355"/>
<dbReference type="KEGG" id="sasa:100136355"/>
<dbReference type="CTD" id="353223"/>
<dbReference type="OrthoDB" id="348690at7898"/>
<dbReference type="Proteomes" id="UP000087266">
    <property type="component" value="Chromosome ssa22"/>
</dbReference>
<dbReference type="Bgee" id="ENSSSAG00000050784">
    <property type="expression patterns" value="Expressed in pituitary gland and 6 other cell types or tissues"/>
</dbReference>
<dbReference type="GO" id="GO:0005737">
    <property type="term" value="C:cytoplasm"/>
    <property type="evidence" value="ECO:0007669"/>
    <property type="project" value="TreeGrafter"/>
</dbReference>
<dbReference type="GO" id="GO:0005615">
    <property type="term" value="C:extracellular space"/>
    <property type="evidence" value="ECO:0007669"/>
    <property type="project" value="TreeGrafter"/>
</dbReference>
<dbReference type="GO" id="GO:0005179">
    <property type="term" value="F:hormone activity"/>
    <property type="evidence" value="ECO:0007669"/>
    <property type="project" value="UniProtKB-KW"/>
</dbReference>
<dbReference type="GO" id="GO:0007186">
    <property type="term" value="P:G protein-coupled receptor signaling pathway"/>
    <property type="evidence" value="ECO:0007669"/>
    <property type="project" value="TreeGrafter"/>
</dbReference>
<dbReference type="CDD" id="cd00069">
    <property type="entry name" value="GHB_like"/>
    <property type="match status" value="1"/>
</dbReference>
<dbReference type="FunFam" id="2.10.90.10:FF:000007">
    <property type="entry name" value="Luteinizing hormone beta subunit"/>
    <property type="match status" value="1"/>
</dbReference>
<dbReference type="Gene3D" id="2.10.90.10">
    <property type="entry name" value="Cystine-knot cytokines"/>
    <property type="match status" value="1"/>
</dbReference>
<dbReference type="InterPro" id="IPR029034">
    <property type="entry name" value="Cystine-knot_cytokine"/>
</dbReference>
<dbReference type="InterPro" id="IPR006208">
    <property type="entry name" value="Glyco_hormone_CN"/>
</dbReference>
<dbReference type="InterPro" id="IPR001545">
    <property type="entry name" value="Gonadotropin_bsu"/>
</dbReference>
<dbReference type="InterPro" id="IPR018245">
    <property type="entry name" value="Gonadotropin_bsu_CS"/>
</dbReference>
<dbReference type="PANTHER" id="PTHR11515">
    <property type="entry name" value="GLYCOPROTEIN HORMONE BETA CHAIN"/>
    <property type="match status" value="1"/>
</dbReference>
<dbReference type="PANTHER" id="PTHR11515:SF5">
    <property type="entry name" value="THYROTROPIN SUBUNIT BETA"/>
    <property type="match status" value="1"/>
</dbReference>
<dbReference type="Pfam" id="PF00007">
    <property type="entry name" value="Cys_knot"/>
    <property type="match status" value="1"/>
</dbReference>
<dbReference type="SMART" id="SM00068">
    <property type="entry name" value="GHB"/>
    <property type="match status" value="1"/>
</dbReference>
<dbReference type="SUPFAM" id="SSF57501">
    <property type="entry name" value="Cystine-knot cytokines"/>
    <property type="match status" value="1"/>
</dbReference>
<dbReference type="PROSITE" id="PS00261">
    <property type="entry name" value="GLYCO_HORMONE_BETA_1"/>
    <property type="match status" value="1"/>
</dbReference>
<dbReference type="PROSITE" id="PS00689">
    <property type="entry name" value="GLYCO_HORMONE_BETA_2"/>
    <property type="match status" value="1"/>
</dbReference>
<feature type="signal peptide" evidence="1">
    <location>
        <begin position="1"/>
        <end position="20"/>
    </location>
</feature>
<feature type="chain" id="PRO_0000011760" description="Thyrotropin subunit beta">
    <location>
        <begin position="21"/>
        <end position="139"/>
    </location>
</feature>
<feature type="glycosylation site" description="N-linked (GlcNAc...) asparagine" evidence="2">
    <location>
        <position position="43"/>
    </location>
</feature>
<feature type="disulfide bond" evidence="1">
    <location>
        <begin position="22"/>
        <end position="72"/>
    </location>
</feature>
<feature type="disulfide bond" evidence="1">
    <location>
        <begin position="36"/>
        <end position="87"/>
    </location>
</feature>
<feature type="disulfide bond" evidence="1">
    <location>
        <begin position="39"/>
        <end position="127"/>
    </location>
</feature>
<feature type="disulfide bond" evidence="1">
    <location>
        <begin position="47"/>
        <end position="103"/>
    </location>
</feature>
<feature type="disulfide bond" evidence="1">
    <location>
        <begin position="51"/>
        <end position="105"/>
    </location>
</feature>
<feature type="disulfide bond" evidence="1">
    <location>
        <begin position="108"/>
        <end position="115"/>
    </location>
</feature>
<protein>
    <recommendedName>
        <fullName>Thyrotropin subunit beta</fullName>
    </recommendedName>
    <alternativeName>
        <fullName>Thyroid-stimulating hormone subunit beta</fullName>
        <shortName>TSH-B</shortName>
        <shortName>TSH-beta</shortName>
    </alternativeName>
    <alternativeName>
        <fullName>Thyrotropin beta chain</fullName>
    </alternativeName>
</protein>
<accession>O73824</accession>
<name>TSHB_SALSA</name>
<organism>
    <name type="scientific">Salmo salar</name>
    <name type="common">Atlantic salmon</name>
    <dbReference type="NCBI Taxonomy" id="8030"/>
    <lineage>
        <taxon>Eukaryota</taxon>
        <taxon>Metazoa</taxon>
        <taxon>Chordata</taxon>
        <taxon>Craniata</taxon>
        <taxon>Vertebrata</taxon>
        <taxon>Euteleostomi</taxon>
        <taxon>Actinopterygii</taxon>
        <taxon>Neopterygii</taxon>
        <taxon>Teleostei</taxon>
        <taxon>Protacanthopterygii</taxon>
        <taxon>Salmoniformes</taxon>
        <taxon>Salmonidae</taxon>
        <taxon>Salmoninae</taxon>
        <taxon>Salmo</taxon>
    </lineage>
</organism>
<gene>
    <name type="primary">tshb</name>
</gene>
<sequence length="139" mass="15449">MELSVAMCGLLCLLFSQAVPMCVPTDYTLYEERRECDFCVAINTTICMGFCYSRDSNMKELAGPRFLIQRGCTYDQVEYRTVILPGCPLHANPLFTYPVALSCHCGTCNTDSDECAHKASSGDGARCSKPLRHIYHTLA</sequence>
<evidence type="ECO:0000250" key="1"/>
<evidence type="ECO:0000255" key="2"/>
<evidence type="ECO:0000305" key="3"/>
<proteinExistence type="evidence at transcript level"/>
<comment type="function">
    <text>Indispensable for the control of thyroid structure and metabolism. May play some role in the biological processes of the immature fishes.</text>
</comment>
<comment type="subunit">
    <text>Heterodimer of a common alpha chain and a unique beta chain which confers biological specificity to thyrotropin, lutropin, follitropin and gonadotropin.</text>
</comment>
<comment type="subcellular location">
    <subcellularLocation>
        <location>Secreted</location>
    </subcellularLocation>
</comment>
<comment type="similarity">
    <text evidence="3">Belongs to the glycoprotein hormones subunit beta family.</text>
</comment>
<keyword id="KW-1015">Disulfide bond</keyword>
<keyword id="KW-0325">Glycoprotein</keyword>
<keyword id="KW-0372">Hormone</keyword>
<keyword id="KW-1185">Reference proteome</keyword>
<keyword id="KW-0964">Secreted</keyword>
<keyword id="KW-0732">Signal</keyword>